<comment type="function">
    <molecule>Cytochrome b-c1 complex subunit Rieske, mitochondrial</molecule>
    <text evidence="1 3">Component of the ubiquinol-cytochrome c oxidoreductase, a multisubunit transmembrane complex that is part of the mitochondrial electron transport chain which drives oxidative phosphorylation. The respiratory chain contains 3 multisubunit complexes succinate dehydrogenase (complex II, CII), ubiquinol-cytochrome c oxidoreductase (cytochrome b-c1 complex, complex III, CIII) and cytochrome c oxidase (complex IV, CIV), that cooperate to transfer electrons derived from NADH and succinate to molecular oxygen, creating an electrochemical gradient over the inner membrane that drives transmembrane transport and the ATP synthase. The cytochrome b-c1 complex catalyzes electron transfer from ubiquinol to cytochrome c, linking this redox reaction to translocation of protons across the mitochondrial inner membrane, with protons being carried across the membrane as hydrogens on the quinol. In the process called Q cycle, 2 protons are consumed from the matrix, 4 protons are released into the intermembrane space and 2 electrons are passed to cytochrome c. The Rieske protein is a catalytic core subunit containing a [2Fe-2S] iron-sulfur cluster. It cycles between 2 conformational states during catalysis to transfer electrons from the quinol bound in the Q(0) site in cytochrome b to cytochrome c1 (By similarity). Incorporation of UQCRFS1 is the penultimate step in complex III assembly (By similarity).</text>
</comment>
<comment type="function">
    <molecule>Cytochrome b-c1 complex subunit 9</molecule>
    <text evidence="2 3 5">Component of the ubiquinol-cytochrome c oxidoreductase (cytochrome b-c1 complex, complex III, CIII). UQCRFS1 undergoes proteolytic processing once it is incorporated in the complex III dimer. One of the fragments, called subunit 9, corresponds to its mitochondrial targeting sequence (MTS) (By similarity). The proteolytic processing is necessary for the correct insertion of UQCRFS1 in the complex III dimer, but the persistence of UQCRFS1-derived fragments may prevent newly imported UQCRFS1 to be processed and assembled into complex III and is detrimental for the complex III structure and function (By similarity).</text>
</comment>
<comment type="catalytic activity">
    <reaction evidence="1">
        <text>a quinol + 2 Fe(III)-[cytochrome c](out) = a quinone + 2 Fe(II)-[cytochrome c](out) + 2 H(+)(out)</text>
        <dbReference type="Rhea" id="RHEA:11484"/>
        <dbReference type="Rhea" id="RHEA-COMP:10350"/>
        <dbReference type="Rhea" id="RHEA-COMP:14399"/>
        <dbReference type="ChEBI" id="CHEBI:15378"/>
        <dbReference type="ChEBI" id="CHEBI:24646"/>
        <dbReference type="ChEBI" id="CHEBI:29033"/>
        <dbReference type="ChEBI" id="CHEBI:29034"/>
        <dbReference type="ChEBI" id="CHEBI:132124"/>
        <dbReference type="EC" id="7.1.1.8"/>
    </reaction>
</comment>
<comment type="cofactor">
    <cofactor evidence="6">
        <name>[2Fe-2S] cluster</name>
        <dbReference type="ChEBI" id="CHEBI:190135"/>
    </cofactor>
    <text evidence="3 6">Binds 1 [2Fe-2S] cluster per subunit. Fe-S cluster delivery to the Rieske protein is mediated by components of the iron sulfur (Fe-S) cluster assembly machinery that reside in the mitochondrial matrix (including HSC20 and LYRM7) (By similarity).</text>
</comment>
<comment type="subunit">
    <molecule>Cytochrome b-c1 complex subunit Rieske, mitochondrial</molecule>
    <text evidence="2 3">Component of the ubiquinol-cytochrome c oxidoreductase (cytochrome b-c1 complex, complex III, CIII), a multisubunit enzyme composed of 11 subunits. The complex is composed of 3 respiratory subunits cytochrome b, cytochrome c1 and Rieske protein UQCRFS1, 2 core protein subunits UQCRC1/QCR1 and UQCRC2/QCR2, and 6 low-molecular weight protein subunits UQCRH/QCR6, UQCRB/QCR7, UQCRQ/QCR8, UQCR10/QCR9, UQCR11/QCR10 and subunit 9, the cleavage product of Rieske protein UQCRFS1. The complex exists as an obligatory dimer and forms supercomplexes (SCs) in the inner mitochondrial membrane with NADH-ubiquinone oxidoreductase (complex I, CI) and cytochrome c oxidase (complex IV, CIV), resulting in different assemblies (supercomplex SCI(1)III(2)IV(1) and megacomplex MCI(2)III(2)IV(2)) (By similarity). Incorporation of the Rieske protein UQCRFS1 is the penultimate step in complex III assembly. Interacts with TTC19, which is involved in the clearance of UQCRFS1 fragments (By similarity).</text>
</comment>
<comment type="subunit">
    <molecule>Cytochrome b-c1 complex subunit 9</molecule>
    <text evidence="2">Component of the ubiquinol-cytochrome c oxidoreductase (cytochrome b-c1 complex, complex III, CIII). Subunit 9 corresponds to the mitochondrial targeting sequence (MTS) of Rieske protein UQCRFS1. It is retained after processing and incorporated inside complex III, where it remains bound to the complex and localizes between the 2 core subunits UQCRC1/QCR1 and UQCRC2/QCR2.</text>
</comment>
<comment type="subcellular location">
    <subcellularLocation>
        <location evidence="4">Mitochondrion inner membrane</location>
        <topology evidence="4">Single-pass membrane protein</topology>
    </subcellularLocation>
</comment>
<comment type="PTM">
    <text evidence="5">Proteolytic processing is necessary for the correct insertion of UQCRFS1 in the complex III dimer. Several fragments are generated during UQCRFS1 insertion, most probably due to the endogenous matrix-processing peptidase (MPP) activity of the 2 core protein subunits UQCRC1/QCR1 and UQCRC2/QCR2, which are homologous to the 2 mitochondrial-processing peptidase (MPP) subunits beta-MPP and alpha-MPP respectively. The action of the protease is also necessary for the clearance of the UQCRFS1 fragments.</text>
</comment>
<comment type="miscellaneous">
    <text>The Rieske protein is a high potential 2Fe-2S protein.</text>
</comment>
<comment type="similarity">
    <text evidence="7">Belongs to the Rieske iron-sulfur protein family.</text>
</comment>
<comment type="caution">
    <text evidence="2 3">Several peptides are generated during UQCRFS1 insertion. According to some authors, the identification of the transit peptide as the subunit 9, does not necessary imply that it must be considered as a structural subunit of the complex III dimer as additional fragments from UQCRFS1 are also present.</text>
</comment>
<sequence>MLSVAARSGPFAPVLSATSRGVAGALRPLLQSAVPATSEPPVLDVKRPFLCRESLSGQAATRPLVATVGLNVPASVRYSHTDIKVPDFSDYRRAEVLDSTKSSKESSEARKGFSYLVTATTTVGVAYAAKNAVSQFVSSMSASADVLAMSKIEIKLSDIPEGKNMAFKWRGKPLFVRHRTKKEIDQEAAVEVSQLRDPQHDLERVKKPEWVILIGVCTHLGCVPIANAGDFGGYYCPCHGSHYDASGRIRKGPAPLNLEVPTYEFTSGDVVVVG</sequence>
<feature type="chain" id="PRO_0000307248" description="Cytochrome b-c1 complex subunit 9" evidence="5">
    <location>
        <begin position="1"/>
        <end position="78"/>
    </location>
</feature>
<feature type="chain" id="PRO_0000030671" description="Cytochrome b-c1 complex subunit Rieske, mitochondrial">
    <location>
        <begin position="79"/>
        <end position="274"/>
    </location>
</feature>
<feature type="topological domain" description="Mitochondrial matrix" evidence="2">
    <location>
        <begin position="79"/>
        <end position="103"/>
    </location>
</feature>
<feature type="transmembrane region" description="Helical" evidence="2">
    <location>
        <begin position="104"/>
        <end position="140"/>
    </location>
</feature>
<feature type="topological domain" description="Mitochondrial intermembrane" evidence="2">
    <location>
        <begin position="141"/>
        <end position="274"/>
    </location>
</feature>
<feature type="domain" description="Rieske" evidence="6">
    <location>
        <begin position="187"/>
        <end position="272"/>
    </location>
</feature>
<feature type="binding site" evidence="2">
    <location>
        <position position="217"/>
    </location>
    <ligand>
        <name>[2Fe-2S] cluster</name>
        <dbReference type="ChEBI" id="CHEBI:190135"/>
    </ligand>
</feature>
<feature type="binding site" evidence="2">
    <location>
        <position position="219"/>
    </location>
    <ligand>
        <name>[2Fe-2S] cluster</name>
        <dbReference type="ChEBI" id="CHEBI:190135"/>
    </ligand>
</feature>
<feature type="binding site" evidence="2">
    <location>
        <position position="236"/>
    </location>
    <ligand>
        <name>[2Fe-2S] cluster</name>
        <dbReference type="ChEBI" id="CHEBI:190135"/>
    </ligand>
</feature>
<feature type="binding site" evidence="2">
    <location>
        <position position="239"/>
    </location>
    <ligand>
        <name>[2Fe-2S] cluster</name>
        <dbReference type="ChEBI" id="CHEBI:190135"/>
    </ligand>
</feature>
<feature type="binding site" evidence="2">
    <location>
        <position position="241"/>
    </location>
    <ligand>
        <name>[2Fe-2S] cluster</name>
        <dbReference type="ChEBI" id="CHEBI:190135"/>
    </ligand>
</feature>
<feature type="disulfide bond" evidence="2">
    <location>
        <begin position="222"/>
        <end position="238"/>
    </location>
</feature>
<protein>
    <recommendedName>
        <fullName>Cytochrome b-c1 complex subunit Rieske, mitochondrial</fullName>
        <ecNumber>7.1.1.8</ecNumber>
    </recommendedName>
    <alternativeName>
        <fullName>Complex III subunit 5</fullName>
    </alternativeName>
    <alternativeName>
        <fullName>Cytochrome b-c1 complex subunit 5</fullName>
    </alternativeName>
    <alternativeName>
        <fullName>Liver regeneration-related protein LRRGT00195</fullName>
    </alternativeName>
    <alternativeName>
        <fullName>Rieske iron-sulfur protein</fullName>
        <shortName>RISP</shortName>
    </alternativeName>
    <alternativeName>
        <fullName evidence="7">Rieske protein UQCRFS1</fullName>
    </alternativeName>
    <alternativeName>
        <fullName>Ubiquinol-cytochrome c reductase iron-sulfur subunit</fullName>
    </alternativeName>
    <component>
        <recommendedName>
            <fullName evidence="2">Cytochrome b-c1 complex subunit 9</fullName>
            <shortName evidence="2">Su9</shortName>
            <shortName evidence="2">Subunit 9</shortName>
        </recommendedName>
        <alternativeName>
            <fullName evidence="2">8 kDa subunit 9</fullName>
        </alternativeName>
        <alternativeName>
            <fullName>Complex III subunit IX</fullName>
        </alternativeName>
        <alternativeName>
            <fullName>Cytochrome b-c1 complex subunit 11</fullName>
        </alternativeName>
        <alternativeName>
            <fullName>UQCRFS1 mitochondrial targeting sequence</fullName>
            <shortName>UQCRFS1 MTS</shortName>
        </alternativeName>
        <alternativeName>
            <fullName evidence="2">Ubiquinol-cytochrome c reductase 8 kDa protein</fullName>
        </alternativeName>
    </component>
</protein>
<dbReference type="EC" id="7.1.1.8"/>
<dbReference type="EMBL" id="AY539946">
    <property type="protein sequence ID" value="AAS66286.1"/>
    <property type="molecule type" value="mRNA"/>
</dbReference>
<dbReference type="EMBL" id="BC085339">
    <property type="protein sequence ID" value="AAH85339.1"/>
    <property type="molecule type" value="mRNA"/>
</dbReference>
<dbReference type="EMBL" id="M24542">
    <property type="protein sequence ID" value="AAA42051.1"/>
    <property type="molecule type" value="Genomic_DNA"/>
</dbReference>
<dbReference type="PIR" id="A32296">
    <property type="entry name" value="A32296"/>
</dbReference>
<dbReference type="RefSeq" id="NP_001008888.1">
    <property type="nucleotide sequence ID" value="NM_001008888.1"/>
</dbReference>
<dbReference type="RefSeq" id="XP_063132254.1">
    <property type="nucleotide sequence ID" value="XM_063276184.1"/>
</dbReference>
<dbReference type="SMR" id="P20788"/>
<dbReference type="BioGRID" id="253421">
    <property type="interactions" value="5"/>
</dbReference>
<dbReference type="CORUM" id="P20788"/>
<dbReference type="FunCoup" id="P20788">
    <property type="interactions" value="1739"/>
</dbReference>
<dbReference type="IntAct" id="P20788">
    <property type="interactions" value="2"/>
</dbReference>
<dbReference type="MINT" id="P20788"/>
<dbReference type="STRING" id="10116.ENSRNOP00000024609"/>
<dbReference type="GlyGen" id="P20788">
    <property type="glycosylation" value="5 sites, 1 O-linked glycan (5 sites)"/>
</dbReference>
<dbReference type="iPTMnet" id="P20788"/>
<dbReference type="PhosphoSitePlus" id="P20788"/>
<dbReference type="SwissPalm" id="P20788"/>
<dbReference type="jPOST" id="P20788"/>
<dbReference type="PaxDb" id="10116-ENSRNOP00000024609"/>
<dbReference type="Ensembl" id="ENSRNOT00000024609.7">
    <property type="protein sequence ID" value="ENSRNOP00000024609.4"/>
    <property type="gene ID" value="ENSRNOG00000018281.7"/>
</dbReference>
<dbReference type="GeneID" id="291103"/>
<dbReference type="KEGG" id="rno:291103"/>
<dbReference type="UCSC" id="RGD:628838">
    <property type="organism name" value="rat"/>
</dbReference>
<dbReference type="AGR" id="RGD:628838"/>
<dbReference type="CTD" id="7386"/>
<dbReference type="RGD" id="628838">
    <property type="gene designation" value="Uqcrfs1"/>
</dbReference>
<dbReference type="eggNOG" id="KOG1671">
    <property type="taxonomic scope" value="Eukaryota"/>
</dbReference>
<dbReference type="GeneTree" id="ENSGT00390000001014"/>
<dbReference type="HOGENOM" id="CLU_055690_0_1_1"/>
<dbReference type="InParanoid" id="P20788"/>
<dbReference type="OMA" id="PPYDFND"/>
<dbReference type="PhylomeDB" id="P20788"/>
<dbReference type="TreeFam" id="TF105037"/>
<dbReference type="Reactome" id="R-RNO-611105">
    <property type="pathway name" value="Respiratory electron transport"/>
</dbReference>
<dbReference type="Reactome" id="R-RNO-9865881">
    <property type="pathway name" value="Complex III assembly"/>
</dbReference>
<dbReference type="PRO" id="PR:P20788"/>
<dbReference type="Proteomes" id="UP000002494">
    <property type="component" value="Chromosome 17"/>
</dbReference>
<dbReference type="Bgee" id="ENSRNOG00000018281">
    <property type="expression patterns" value="Expressed in heart and 20 other cell types or tissues"/>
</dbReference>
<dbReference type="GO" id="GO:0005743">
    <property type="term" value="C:mitochondrial inner membrane"/>
    <property type="evidence" value="ECO:0000266"/>
    <property type="project" value="RGD"/>
</dbReference>
<dbReference type="GO" id="GO:0031966">
    <property type="term" value="C:mitochondrial membrane"/>
    <property type="evidence" value="ECO:0000314"/>
    <property type="project" value="RGD"/>
</dbReference>
<dbReference type="GO" id="GO:0005739">
    <property type="term" value="C:mitochondrion"/>
    <property type="evidence" value="ECO:0000266"/>
    <property type="project" value="RGD"/>
</dbReference>
<dbReference type="GO" id="GO:0045275">
    <property type="term" value="C:respiratory chain complex III"/>
    <property type="evidence" value="ECO:0000314"/>
    <property type="project" value="RGD"/>
</dbReference>
<dbReference type="GO" id="GO:0051537">
    <property type="term" value="F:2 iron, 2 sulfur cluster binding"/>
    <property type="evidence" value="ECO:0007669"/>
    <property type="project" value="UniProtKB-KW"/>
</dbReference>
<dbReference type="GO" id="GO:0046872">
    <property type="term" value="F:metal ion binding"/>
    <property type="evidence" value="ECO:0007669"/>
    <property type="project" value="UniProtKB-KW"/>
</dbReference>
<dbReference type="GO" id="GO:0016491">
    <property type="term" value="F:oxidoreductase activity"/>
    <property type="evidence" value="ECO:0000318"/>
    <property type="project" value="GO_Central"/>
</dbReference>
<dbReference type="GO" id="GO:0044877">
    <property type="term" value="F:protein-containing complex binding"/>
    <property type="evidence" value="ECO:0000314"/>
    <property type="project" value="RGD"/>
</dbReference>
<dbReference type="GO" id="GO:0008121">
    <property type="term" value="F:ubiquinol-cytochrome-c reductase activity"/>
    <property type="evidence" value="ECO:0000304"/>
    <property type="project" value="RGD"/>
</dbReference>
<dbReference type="GO" id="GO:0006122">
    <property type="term" value="P:mitochondrial electron transport, ubiquinol to cytochrome c"/>
    <property type="evidence" value="ECO:0000318"/>
    <property type="project" value="GO_Central"/>
</dbReference>
<dbReference type="GO" id="GO:0034551">
    <property type="term" value="P:mitochondrial respiratory chain complex III assembly"/>
    <property type="evidence" value="ECO:0000266"/>
    <property type="project" value="RGD"/>
</dbReference>
<dbReference type="GO" id="GO:0022904">
    <property type="term" value="P:respiratory electron transport chain"/>
    <property type="evidence" value="ECO:0000250"/>
    <property type="project" value="UniProtKB"/>
</dbReference>
<dbReference type="GO" id="GO:0009725">
    <property type="term" value="P:response to hormone"/>
    <property type="evidence" value="ECO:0000270"/>
    <property type="project" value="RGD"/>
</dbReference>
<dbReference type="GO" id="GO:0009410">
    <property type="term" value="P:response to xenobiotic stimulus"/>
    <property type="evidence" value="ECO:0000270"/>
    <property type="project" value="RGD"/>
</dbReference>
<dbReference type="CDD" id="cd03470">
    <property type="entry name" value="Rieske_cytochrome_bc1"/>
    <property type="match status" value="1"/>
</dbReference>
<dbReference type="FunFam" id="1.20.5.270:FF:000001">
    <property type="entry name" value="Cytochrome b-c1 complex subunit Rieske, mitochondrial"/>
    <property type="match status" value="1"/>
</dbReference>
<dbReference type="FunFam" id="2.10.210.10:FF:000001">
    <property type="entry name" value="Cytochrome b-c1 complex subunit Rieske, mitochondrial"/>
    <property type="match status" value="1"/>
</dbReference>
<dbReference type="FunFam" id="2.102.10.10:FF:000001">
    <property type="entry name" value="Cytochrome b-c1 complex subunit Rieske, mitochondrial"/>
    <property type="match status" value="1"/>
</dbReference>
<dbReference type="Gene3D" id="2.10.210.10">
    <property type="entry name" value="Cytochrome Bc1 Complex, Chain I"/>
    <property type="match status" value="1"/>
</dbReference>
<dbReference type="Gene3D" id="2.102.10.10">
    <property type="entry name" value="Rieske [2Fe-2S] iron-sulphur domain"/>
    <property type="match status" value="1"/>
</dbReference>
<dbReference type="Gene3D" id="1.20.5.270">
    <property type="entry name" value="Ubiquinol cytochrome reductase, transmembrane domain"/>
    <property type="match status" value="1"/>
</dbReference>
<dbReference type="InterPro" id="IPR037008">
    <property type="entry name" value="bc1_Rieske_TM_sf"/>
</dbReference>
<dbReference type="InterPro" id="IPR011070">
    <property type="entry name" value="Globular_prot_asu/bsu"/>
</dbReference>
<dbReference type="InterPro" id="IPR017941">
    <property type="entry name" value="Rieske_2Fe-2S"/>
</dbReference>
<dbReference type="InterPro" id="IPR036922">
    <property type="entry name" value="Rieske_2Fe-2S_sf"/>
</dbReference>
<dbReference type="InterPro" id="IPR014349">
    <property type="entry name" value="Rieske_Fe-S_prot"/>
</dbReference>
<dbReference type="InterPro" id="IPR005805">
    <property type="entry name" value="Rieske_Fe-S_prot_C"/>
</dbReference>
<dbReference type="InterPro" id="IPR004192">
    <property type="entry name" value="Rieske_TM"/>
</dbReference>
<dbReference type="InterPro" id="IPR006317">
    <property type="entry name" value="Ubiquinol_cyt_c_Rdtase_Fe-S-su"/>
</dbReference>
<dbReference type="InterPro" id="IPR015248">
    <property type="entry name" value="UQCRFS1_N"/>
</dbReference>
<dbReference type="NCBIfam" id="TIGR01416">
    <property type="entry name" value="Rieske_proteo"/>
    <property type="match status" value="1"/>
</dbReference>
<dbReference type="PANTHER" id="PTHR10134">
    <property type="entry name" value="CYTOCHROME B-C1 COMPLEX SUBUNIT RIESKE, MITOCHONDRIAL"/>
    <property type="match status" value="1"/>
</dbReference>
<dbReference type="Pfam" id="PF00355">
    <property type="entry name" value="Rieske"/>
    <property type="match status" value="1"/>
</dbReference>
<dbReference type="Pfam" id="PF09165">
    <property type="entry name" value="Ubiq-Cytc-red_N"/>
    <property type="match status" value="1"/>
</dbReference>
<dbReference type="Pfam" id="PF02921">
    <property type="entry name" value="UCR_TM"/>
    <property type="match status" value="1"/>
</dbReference>
<dbReference type="PRINTS" id="PR00162">
    <property type="entry name" value="RIESKE"/>
</dbReference>
<dbReference type="SUPFAM" id="SSF50022">
    <property type="entry name" value="ISP domain"/>
    <property type="match status" value="1"/>
</dbReference>
<dbReference type="SUPFAM" id="SSF81502">
    <property type="entry name" value="ISP transmembrane anchor"/>
    <property type="match status" value="1"/>
</dbReference>
<dbReference type="SUPFAM" id="SSF56568">
    <property type="entry name" value="Non-globular alpha+beta subunits of globular proteins"/>
    <property type="match status" value="1"/>
</dbReference>
<dbReference type="PROSITE" id="PS51296">
    <property type="entry name" value="RIESKE"/>
    <property type="match status" value="1"/>
</dbReference>
<keyword id="KW-0001">2Fe-2S</keyword>
<keyword id="KW-0903">Direct protein sequencing</keyword>
<keyword id="KW-1015">Disulfide bond</keyword>
<keyword id="KW-0249">Electron transport</keyword>
<keyword id="KW-0408">Iron</keyword>
<keyword id="KW-0411">Iron-sulfur</keyword>
<keyword id="KW-0472">Membrane</keyword>
<keyword id="KW-0479">Metal-binding</keyword>
<keyword id="KW-0496">Mitochondrion</keyword>
<keyword id="KW-0999">Mitochondrion inner membrane</keyword>
<keyword id="KW-1185">Reference proteome</keyword>
<keyword id="KW-0679">Respiratory chain</keyword>
<keyword id="KW-0809">Transit peptide</keyword>
<keyword id="KW-1278">Translocase</keyword>
<keyword id="KW-0812">Transmembrane</keyword>
<keyword id="KW-1133">Transmembrane helix</keyword>
<keyword id="KW-0813">Transport</keyword>
<name>UCRI_RAT</name>
<accession>P20788</accession>
<accession>Q6QI13</accession>
<evidence type="ECO:0000250" key="1">
    <source>
        <dbReference type="UniProtKB" id="P08067"/>
    </source>
</evidence>
<evidence type="ECO:0000250" key="2">
    <source>
        <dbReference type="UniProtKB" id="P13272"/>
    </source>
</evidence>
<evidence type="ECO:0000250" key="3">
    <source>
        <dbReference type="UniProtKB" id="P47985"/>
    </source>
</evidence>
<evidence type="ECO:0000250" key="4">
    <source>
        <dbReference type="UniProtKB" id="Q5ZLR5"/>
    </source>
</evidence>
<evidence type="ECO:0000250" key="5">
    <source>
        <dbReference type="UniProtKB" id="Q9CR68"/>
    </source>
</evidence>
<evidence type="ECO:0000255" key="6">
    <source>
        <dbReference type="PROSITE-ProRule" id="PRU00628"/>
    </source>
</evidence>
<evidence type="ECO:0000305" key="7"/>
<proteinExistence type="evidence at protein level"/>
<organism>
    <name type="scientific">Rattus norvegicus</name>
    <name type="common">Rat</name>
    <dbReference type="NCBI Taxonomy" id="10116"/>
    <lineage>
        <taxon>Eukaryota</taxon>
        <taxon>Metazoa</taxon>
        <taxon>Chordata</taxon>
        <taxon>Craniata</taxon>
        <taxon>Vertebrata</taxon>
        <taxon>Euteleostomi</taxon>
        <taxon>Mammalia</taxon>
        <taxon>Eutheria</taxon>
        <taxon>Euarchontoglires</taxon>
        <taxon>Glires</taxon>
        <taxon>Rodentia</taxon>
        <taxon>Myomorpha</taxon>
        <taxon>Muroidea</taxon>
        <taxon>Muridae</taxon>
        <taxon>Murinae</taxon>
        <taxon>Rattus</taxon>
    </lineage>
</organism>
<gene>
    <name type="primary">Uqcrfs1</name>
</gene>
<reference key="1">
    <citation type="submission" date="2004-02" db="EMBL/GenBank/DDBJ databases">
        <title>Liver regeneration after PH.</title>
        <authorList>
            <person name="Xu C.S."/>
            <person name="Zhang L."/>
            <person name="Chang C.F."/>
            <person name="Han H.P."/>
            <person name="Wang G.P."/>
            <person name="Chai L.Q."/>
            <person name="Yuan J.Y."/>
            <person name="Yang K.J."/>
            <person name="Zhao L.F."/>
            <person name="Ma H."/>
            <person name="Wang L."/>
            <person name="Wang S.F."/>
            <person name="Xing X.K."/>
            <person name="Shen G.M."/>
            <person name="Shi J.B."/>
            <person name="Rahman S."/>
            <person name="Wang Q.N."/>
            <person name="Zhang J.B."/>
        </authorList>
    </citation>
    <scope>NUCLEOTIDE SEQUENCE [LARGE SCALE MRNA]</scope>
</reference>
<reference key="2">
    <citation type="journal article" date="2004" name="Genome Res.">
        <title>The status, quality, and expansion of the NIH full-length cDNA project: the Mammalian Gene Collection (MGC).</title>
        <authorList>
            <consortium name="The MGC Project Team"/>
        </authorList>
    </citation>
    <scope>NUCLEOTIDE SEQUENCE [LARGE SCALE MRNA]</scope>
    <source>
        <tissue>Ovary</tissue>
    </source>
</reference>
<reference key="3">
    <citation type="journal article" date="1989" name="Biochem. Biophys. Res. Commun.">
        <title>Cloning and sequence analysis of a cDNA encoding the Rieske iron-sulfur protein of rat mitochondrial cytochrome bc1 complex.</title>
        <authorList>
            <person name="Nishikimi M."/>
            <person name="Hosokawa Y."/>
            <person name="Toda H."/>
            <person name="Suzuki H."/>
            <person name="Ozawa T."/>
        </authorList>
    </citation>
    <scope>NUCLEOTIDE SEQUENCE [GENOMIC DNA] OF 19-274</scope>
</reference>
<reference key="4">
    <citation type="submission" date="2007-04" db="UniProtKB">
        <authorList>
            <person name="Lubec G."/>
            <person name="Chen W.-Q."/>
        </authorList>
    </citation>
    <scope>PROTEIN SEQUENCE OF 85-92 AND 156-163</scope>
    <scope>IDENTIFICATION BY MASS SPECTROMETRY</scope>
    <source>
        <strain>Sprague-Dawley</strain>
        <tissue>Hippocampus</tissue>
    </source>
</reference>